<proteinExistence type="predicted"/>
<name>Y1673_METJA</name>
<feature type="chain" id="PRO_0000107471" description="Uncharacterized protein MJ1673">
    <location>
        <begin position="1"/>
        <end position="129"/>
    </location>
</feature>
<dbReference type="EMBL" id="L77117">
    <property type="protein sequence ID" value="AAB99695.1"/>
    <property type="molecule type" value="Genomic_DNA"/>
</dbReference>
<dbReference type="PIR" id="G64508">
    <property type="entry name" value="G64508"/>
</dbReference>
<dbReference type="RefSeq" id="WP_010871197.1">
    <property type="nucleotide sequence ID" value="NC_000909.1"/>
</dbReference>
<dbReference type="SMR" id="Q59067"/>
<dbReference type="STRING" id="243232.MJ_1673"/>
<dbReference type="PaxDb" id="243232-MJ_1673"/>
<dbReference type="EnsemblBacteria" id="AAB99695">
    <property type="protein sequence ID" value="AAB99695"/>
    <property type="gene ID" value="MJ_1673"/>
</dbReference>
<dbReference type="GeneID" id="1452582"/>
<dbReference type="KEGG" id="mja:MJ_1673"/>
<dbReference type="eggNOG" id="arCOG09685">
    <property type="taxonomic scope" value="Archaea"/>
</dbReference>
<dbReference type="HOGENOM" id="CLU_159273_0_0_2"/>
<dbReference type="InParanoid" id="Q59067"/>
<dbReference type="OrthoDB" id="65374at2157"/>
<dbReference type="Proteomes" id="UP000000805">
    <property type="component" value="Chromosome"/>
</dbReference>
<dbReference type="InterPro" id="IPR049811">
    <property type="entry name" value="MJ1673-like_dom"/>
</dbReference>
<dbReference type="NCBIfam" id="NF040559">
    <property type="entry name" value="CAS_Csx20"/>
    <property type="match status" value="1"/>
</dbReference>
<gene>
    <name type="ordered locus">MJ1673</name>
</gene>
<protein>
    <recommendedName>
        <fullName>Uncharacterized protein MJ1673</fullName>
    </recommendedName>
</protein>
<keyword id="KW-1185">Reference proteome</keyword>
<reference key="1">
    <citation type="journal article" date="1996" name="Science">
        <title>Complete genome sequence of the methanogenic archaeon, Methanococcus jannaschii.</title>
        <authorList>
            <person name="Bult C.J."/>
            <person name="White O."/>
            <person name="Olsen G.J."/>
            <person name="Zhou L."/>
            <person name="Fleischmann R.D."/>
            <person name="Sutton G.G."/>
            <person name="Blake J.A."/>
            <person name="FitzGerald L.M."/>
            <person name="Clayton R.A."/>
            <person name="Gocayne J.D."/>
            <person name="Kerlavage A.R."/>
            <person name="Dougherty B.A."/>
            <person name="Tomb J.-F."/>
            <person name="Adams M.D."/>
            <person name="Reich C.I."/>
            <person name="Overbeek R."/>
            <person name="Kirkness E.F."/>
            <person name="Weinstock K.G."/>
            <person name="Merrick J.M."/>
            <person name="Glodek A."/>
            <person name="Scott J.L."/>
            <person name="Geoghagen N.S.M."/>
            <person name="Weidman J.F."/>
            <person name="Fuhrmann J.L."/>
            <person name="Nguyen D."/>
            <person name="Utterback T.R."/>
            <person name="Kelley J.M."/>
            <person name="Peterson J.D."/>
            <person name="Sadow P.W."/>
            <person name="Hanna M.C."/>
            <person name="Cotton M.D."/>
            <person name="Roberts K.M."/>
            <person name="Hurst M.A."/>
            <person name="Kaine B.P."/>
            <person name="Borodovsky M."/>
            <person name="Klenk H.-P."/>
            <person name="Fraser C.M."/>
            <person name="Smith H.O."/>
            <person name="Woese C.R."/>
            <person name="Venter J.C."/>
        </authorList>
    </citation>
    <scope>NUCLEOTIDE SEQUENCE [LARGE SCALE GENOMIC DNA]</scope>
    <source>
        <strain>ATCC 43067 / DSM 2661 / JAL-1 / JCM 10045 / NBRC 100440</strain>
    </source>
</reference>
<sequence length="129" mass="15418">MPKMFLLFSHKLTDDQINDARKNLKVDEFIYLPKELQELWSNIPPDVDDIDNYLKPIKEFLEKHAKPNDYVLIQGDFGATYKMVNFAIDKNLIPIYSTTKRIAKDIYKDGKIITIRKFKHCRFRKYNPY</sequence>
<organism>
    <name type="scientific">Methanocaldococcus jannaschii (strain ATCC 43067 / DSM 2661 / JAL-1 / JCM 10045 / NBRC 100440)</name>
    <name type="common">Methanococcus jannaschii</name>
    <dbReference type="NCBI Taxonomy" id="243232"/>
    <lineage>
        <taxon>Archaea</taxon>
        <taxon>Methanobacteriati</taxon>
        <taxon>Methanobacteriota</taxon>
        <taxon>Methanomada group</taxon>
        <taxon>Methanococci</taxon>
        <taxon>Methanococcales</taxon>
        <taxon>Methanocaldococcaceae</taxon>
        <taxon>Methanocaldococcus</taxon>
    </lineage>
</organism>
<accession>Q59067</accession>